<protein>
    <recommendedName>
        <fullName evidence="1">Ribonuclease PH</fullName>
        <shortName evidence="1">RNase PH</shortName>
        <ecNumber evidence="1">2.7.7.56</ecNumber>
    </recommendedName>
    <alternativeName>
        <fullName evidence="1">tRNA nucleotidyltransferase</fullName>
    </alternativeName>
</protein>
<reference key="1">
    <citation type="journal article" date="2004" name="Mol. Plant Microbe Interact.">
        <title>The genome sequence of the Gram-positive sugarcane pathogen Leifsonia xyli subsp. xyli.</title>
        <authorList>
            <person name="Monteiro-Vitorello C.B."/>
            <person name="Camargo L.E.A."/>
            <person name="Van Sluys M.A."/>
            <person name="Kitajima J.P."/>
            <person name="Truffi D."/>
            <person name="do Amaral A.M."/>
            <person name="Harakava R."/>
            <person name="de Oliveira J.C.F."/>
            <person name="Wood D."/>
            <person name="de Oliveira M.C."/>
            <person name="Miyaki C.Y."/>
            <person name="Takita M.A."/>
            <person name="da Silva A.C.R."/>
            <person name="Furlan L.R."/>
            <person name="Carraro D.M."/>
            <person name="Camarotte G."/>
            <person name="Almeida N.F. Jr."/>
            <person name="Carrer H."/>
            <person name="Coutinho L.L."/>
            <person name="El-Dorry H.A."/>
            <person name="Ferro M.I.T."/>
            <person name="Gagliardi P.R."/>
            <person name="Giglioti E."/>
            <person name="Goldman M.H.S."/>
            <person name="Goldman G.H."/>
            <person name="Kimura E.T."/>
            <person name="Ferro E.S."/>
            <person name="Kuramae E.E."/>
            <person name="Lemos E.G.M."/>
            <person name="Lemos M.V.F."/>
            <person name="Mauro S.M.Z."/>
            <person name="Machado M.A."/>
            <person name="Marino C.L."/>
            <person name="Menck C.F."/>
            <person name="Nunes L.R."/>
            <person name="Oliveira R.C."/>
            <person name="Pereira G.G."/>
            <person name="Siqueira W."/>
            <person name="de Souza A.A."/>
            <person name="Tsai S.M."/>
            <person name="Zanca A.S."/>
            <person name="Simpson A.J.G."/>
            <person name="Brumbley S.M."/>
            <person name="Setubal J.C."/>
        </authorList>
    </citation>
    <scope>NUCLEOTIDE SEQUENCE [LARGE SCALE GENOMIC DNA]</scope>
    <source>
        <strain>CTCB07</strain>
    </source>
</reference>
<name>RNPH_LEIXX</name>
<dbReference type="EC" id="2.7.7.56" evidence="1"/>
<dbReference type="EMBL" id="AE016822">
    <property type="protein sequence ID" value="AAT89187.1"/>
    <property type="molecule type" value="Genomic_DNA"/>
</dbReference>
<dbReference type="RefSeq" id="WP_011186181.1">
    <property type="nucleotide sequence ID" value="NC_006087.1"/>
</dbReference>
<dbReference type="SMR" id="Q6AEK9"/>
<dbReference type="STRING" id="281090.Lxx13580"/>
<dbReference type="KEGG" id="lxx:Lxx13580"/>
<dbReference type="eggNOG" id="COG0689">
    <property type="taxonomic scope" value="Bacteria"/>
</dbReference>
<dbReference type="HOGENOM" id="CLU_050858_0_0_11"/>
<dbReference type="Proteomes" id="UP000001306">
    <property type="component" value="Chromosome"/>
</dbReference>
<dbReference type="GO" id="GO:0000175">
    <property type="term" value="F:3'-5'-RNA exonuclease activity"/>
    <property type="evidence" value="ECO:0007669"/>
    <property type="project" value="UniProtKB-UniRule"/>
</dbReference>
<dbReference type="GO" id="GO:0000049">
    <property type="term" value="F:tRNA binding"/>
    <property type="evidence" value="ECO:0007669"/>
    <property type="project" value="UniProtKB-UniRule"/>
</dbReference>
<dbReference type="GO" id="GO:0009022">
    <property type="term" value="F:tRNA nucleotidyltransferase activity"/>
    <property type="evidence" value="ECO:0007669"/>
    <property type="project" value="UniProtKB-UniRule"/>
</dbReference>
<dbReference type="GO" id="GO:0016075">
    <property type="term" value="P:rRNA catabolic process"/>
    <property type="evidence" value="ECO:0007669"/>
    <property type="project" value="UniProtKB-UniRule"/>
</dbReference>
<dbReference type="GO" id="GO:0006364">
    <property type="term" value="P:rRNA processing"/>
    <property type="evidence" value="ECO:0007669"/>
    <property type="project" value="UniProtKB-KW"/>
</dbReference>
<dbReference type="GO" id="GO:0008033">
    <property type="term" value="P:tRNA processing"/>
    <property type="evidence" value="ECO:0007669"/>
    <property type="project" value="UniProtKB-UniRule"/>
</dbReference>
<dbReference type="CDD" id="cd11362">
    <property type="entry name" value="RNase_PH_bact"/>
    <property type="match status" value="1"/>
</dbReference>
<dbReference type="FunFam" id="3.30.230.70:FF:000003">
    <property type="entry name" value="Ribonuclease PH"/>
    <property type="match status" value="1"/>
</dbReference>
<dbReference type="Gene3D" id="3.30.230.70">
    <property type="entry name" value="GHMP Kinase, N-terminal domain"/>
    <property type="match status" value="1"/>
</dbReference>
<dbReference type="HAMAP" id="MF_00564">
    <property type="entry name" value="RNase_PH"/>
    <property type="match status" value="1"/>
</dbReference>
<dbReference type="InterPro" id="IPR001247">
    <property type="entry name" value="ExoRNase_PH_dom1"/>
</dbReference>
<dbReference type="InterPro" id="IPR015847">
    <property type="entry name" value="ExoRNase_PH_dom2"/>
</dbReference>
<dbReference type="InterPro" id="IPR036345">
    <property type="entry name" value="ExoRNase_PH_dom2_sf"/>
</dbReference>
<dbReference type="InterPro" id="IPR027408">
    <property type="entry name" value="PNPase/RNase_PH_dom_sf"/>
</dbReference>
<dbReference type="InterPro" id="IPR020568">
    <property type="entry name" value="Ribosomal_Su5_D2-typ_SF"/>
</dbReference>
<dbReference type="InterPro" id="IPR050080">
    <property type="entry name" value="RNase_PH"/>
</dbReference>
<dbReference type="InterPro" id="IPR002381">
    <property type="entry name" value="RNase_PH_bac-type"/>
</dbReference>
<dbReference type="InterPro" id="IPR018336">
    <property type="entry name" value="RNase_PH_CS"/>
</dbReference>
<dbReference type="NCBIfam" id="TIGR01966">
    <property type="entry name" value="RNasePH"/>
    <property type="match status" value="1"/>
</dbReference>
<dbReference type="PANTHER" id="PTHR11953">
    <property type="entry name" value="EXOSOME COMPLEX COMPONENT"/>
    <property type="match status" value="1"/>
</dbReference>
<dbReference type="PANTHER" id="PTHR11953:SF0">
    <property type="entry name" value="EXOSOME COMPLEX COMPONENT RRP41"/>
    <property type="match status" value="1"/>
</dbReference>
<dbReference type="Pfam" id="PF01138">
    <property type="entry name" value="RNase_PH"/>
    <property type="match status" value="1"/>
</dbReference>
<dbReference type="Pfam" id="PF03725">
    <property type="entry name" value="RNase_PH_C"/>
    <property type="match status" value="1"/>
</dbReference>
<dbReference type="SUPFAM" id="SSF55666">
    <property type="entry name" value="Ribonuclease PH domain 2-like"/>
    <property type="match status" value="1"/>
</dbReference>
<dbReference type="SUPFAM" id="SSF54211">
    <property type="entry name" value="Ribosomal protein S5 domain 2-like"/>
    <property type="match status" value="1"/>
</dbReference>
<dbReference type="PROSITE" id="PS01277">
    <property type="entry name" value="RIBONUCLEASE_PH"/>
    <property type="match status" value="1"/>
</dbReference>
<gene>
    <name evidence="1" type="primary">rph</name>
    <name type="ordered locus">Lxx13580</name>
</gene>
<accession>Q6AEK9</accession>
<evidence type="ECO:0000255" key="1">
    <source>
        <dbReference type="HAMAP-Rule" id="MF_00564"/>
    </source>
</evidence>
<feature type="chain" id="PRO_0000139903" description="Ribonuclease PH">
    <location>
        <begin position="1"/>
        <end position="251"/>
    </location>
</feature>
<feature type="binding site" evidence="1">
    <location>
        <position position="90"/>
    </location>
    <ligand>
        <name>phosphate</name>
        <dbReference type="ChEBI" id="CHEBI:43474"/>
        <note>substrate</note>
    </ligand>
</feature>
<feature type="binding site" evidence="1">
    <location>
        <begin position="128"/>
        <end position="130"/>
    </location>
    <ligand>
        <name>phosphate</name>
        <dbReference type="ChEBI" id="CHEBI:43474"/>
        <note>substrate</note>
    </ligand>
</feature>
<sequence length="251" mass="26519">MTDTIRADGRTADQLRPVTIERAWNRKAEGSALVSFGGTRVLCTASFTNGVPRWMSGKGRGWVTAEYAMLPRSTNDRMDRESVKGRIGGRTHEISRLIGRSLRAVVDMKALGENTIVLDCDVLQADGGTRTAAITGAYVALADALEWGREHRFIGQKAAPLLDSVSAVSVGIVDGSPMLDLAYTEDVRAETDMNVVVTGRGLFVEVQGTAEGAPFDRSELNGLLDLALAGTTALVAVQSAALAAPAPGCEG</sequence>
<keyword id="KW-0548">Nucleotidyltransferase</keyword>
<keyword id="KW-1185">Reference proteome</keyword>
<keyword id="KW-0694">RNA-binding</keyword>
<keyword id="KW-0698">rRNA processing</keyword>
<keyword id="KW-0808">Transferase</keyword>
<keyword id="KW-0819">tRNA processing</keyword>
<keyword id="KW-0820">tRNA-binding</keyword>
<proteinExistence type="inferred from homology"/>
<organism>
    <name type="scientific">Leifsonia xyli subsp. xyli (strain CTCB07)</name>
    <dbReference type="NCBI Taxonomy" id="281090"/>
    <lineage>
        <taxon>Bacteria</taxon>
        <taxon>Bacillati</taxon>
        <taxon>Actinomycetota</taxon>
        <taxon>Actinomycetes</taxon>
        <taxon>Micrococcales</taxon>
        <taxon>Microbacteriaceae</taxon>
        <taxon>Leifsonia</taxon>
    </lineage>
</organism>
<comment type="function">
    <text evidence="1">Phosphorolytic 3'-5' exoribonuclease that plays an important role in tRNA 3'-end maturation. Removes nucleotide residues following the 3'-CCA terminus of tRNAs; can also add nucleotides to the ends of RNA molecules by using nucleoside diphosphates as substrates, but this may not be physiologically important. Probably plays a role in initiation of 16S rRNA degradation (leading to ribosome degradation) during starvation.</text>
</comment>
<comment type="catalytic activity">
    <reaction evidence="1">
        <text>tRNA(n+1) + phosphate = tRNA(n) + a ribonucleoside 5'-diphosphate</text>
        <dbReference type="Rhea" id="RHEA:10628"/>
        <dbReference type="Rhea" id="RHEA-COMP:17343"/>
        <dbReference type="Rhea" id="RHEA-COMP:17344"/>
        <dbReference type="ChEBI" id="CHEBI:43474"/>
        <dbReference type="ChEBI" id="CHEBI:57930"/>
        <dbReference type="ChEBI" id="CHEBI:173114"/>
        <dbReference type="EC" id="2.7.7.56"/>
    </reaction>
</comment>
<comment type="subunit">
    <text evidence="1">Homohexameric ring arranged as a trimer of dimers.</text>
</comment>
<comment type="similarity">
    <text evidence="1">Belongs to the RNase PH family.</text>
</comment>